<protein>
    <recommendedName>
        <fullName evidence="1">Ribosome maturation factor RimM</fullName>
    </recommendedName>
</protein>
<comment type="function">
    <text evidence="1">An accessory protein needed during the final step in the assembly of 30S ribosomal subunit, possibly for assembly of the head region. Essential for efficient processing of 16S rRNA. May be needed both before and after RbfA during the maturation of 16S rRNA. It has affinity for free ribosomal 30S subunits but not for 70S ribosomes.</text>
</comment>
<comment type="subunit">
    <text evidence="1">Binds ribosomal protein uS19.</text>
</comment>
<comment type="subcellular location">
    <subcellularLocation>
        <location evidence="1">Cytoplasm</location>
    </subcellularLocation>
</comment>
<comment type="domain">
    <text evidence="1">The PRC barrel domain binds ribosomal protein uS19.</text>
</comment>
<comment type="similarity">
    <text evidence="1">Belongs to the RimM family.</text>
</comment>
<feature type="chain" id="PRO_1000089501" description="Ribosome maturation factor RimM">
    <location>
        <begin position="1"/>
        <end position="169"/>
    </location>
</feature>
<feature type="domain" description="PRC barrel" evidence="1">
    <location>
        <begin position="93"/>
        <end position="166"/>
    </location>
</feature>
<name>RIMM_EXIS2</name>
<gene>
    <name evidence="1" type="primary">rimM</name>
    <name type="ordered locus">Exig_1899</name>
</gene>
<proteinExistence type="inferred from homology"/>
<reference key="1">
    <citation type="submission" date="2008-04" db="EMBL/GenBank/DDBJ databases">
        <title>Complete sequence of chromosome of Exiguobacterium sibiricum 255-15.</title>
        <authorList>
            <consortium name="US DOE Joint Genome Institute"/>
            <person name="Copeland A."/>
            <person name="Lucas S."/>
            <person name="Lapidus A."/>
            <person name="Glavina del Rio T."/>
            <person name="Dalin E."/>
            <person name="Tice H."/>
            <person name="Bruce D."/>
            <person name="Goodwin L."/>
            <person name="Pitluck S."/>
            <person name="Kiss H."/>
            <person name="Chertkov O."/>
            <person name="Monk C."/>
            <person name="Brettin T."/>
            <person name="Detter J.C."/>
            <person name="Han C."/>
            <person name="Kuske C.R."/>
            <person name="Schmutz J."/>
            <person name="Larimer F."/>
            <person name="Land M."/>
            <person name="Hauser L."/>
            <person name="Kyrpides N."/>
            <person name="Mikhailova N."/>
            <person name="Vishnivetskaya T."/>
            <person name="Rodrigues D.F."/>
            <person name="Gilichinsky D."/>
            <person name="Tiedje J."/>
            <person name="Richardson P."/>
        </authorList>
    </citation>
    <scope>NUCLEOTIDE SEQUENCE [LARGE SCALE GENOMIC DNA]</scope>
    <source>
        <strain>DSM 17290 / CCUG 55495 / CIP 109462 / JCM 13490 / 255-15</strain>
    </source>
</reference>
<dbReference type="EMBL" id="CP001022">
    <property type="protein sequence ID" value="ACB61351.1"/>
    <property type="molecule type" value="Genomic_DNA"/>
</dbReference>
<dbReference type="RefSeq" id="WP_012370769.1">
    <property type="nucleotide sequence ID" value="NC_010556.1"/>
</dbReference>
<dbReference type="SMR" id="B1YIM5"/>
<dbReference type="STRING" id="262543.Exig_1899"/>
<dbReference type="KEGG" id="esi:Exig_1899"/>
<dbReference type="eggNOG" id="COG0806">
    <property type="taxonomic scope" value="Bacteria"/>
</dbReference>
<dbReference type="HOGENOM" id="CLU_077636_3_1_9"/>
<dbReference type="OrthoDB" id="9810331at2"/>
<dbReference type="Proteomes" id="UP000001681">
    <property type="component" value="Chromosome"/>
</dbReference>
<dbReference type="GO" id="GO:0005737">
    <property type="term" value="C:cytoplasm"/>
    <property type="evidence" value="ECO:0007669"/>
    <property type="project" value="UniProtKB-SubCell"/>
</dbReference>
<dbReference type="GO" id="GO:0005840">
    <property type="term" value="C:ribosome"/>
    <property type="evidence" value="ECO:0007669"/>
    <property type="project" value="InterPro"/>
</dbReference>
<dbReference type="GO" id="GO:0043022">
    <property type="term" value="F:ribosome binding"/>
    <property type="evidence" value="ECO:0007669"/>
    <property type="project" value="InterPro"/>
</dbReference>
<dbReference type="GO" id="GO:0042274">
    <property type="term" value="P:ribosomal small subunit biogenesis"/>
    <property type="evidence" value="ECO:0007669"/>
    <property type="project" value="UniProtKB-UniRule"/>
</dbReference>
<dbReference type="GO" id="GO:0006364">
    <property type="term" value="P:rRNA processing"/>
    <property type="evidence" value="ECO:0007669"/>
    <property type="project" value="UniProtKB-UniRule"/>
</dbReference>
<dbReference type="Gene3D" id="2.30.30.240">
    <property type="entry name" value="PRC-barrel domain"/>
    <property type="match status" value="1"/>
</dbReference>
<dbReference type="Gene3D" id="2.40.30.60">
    <property type="entry name" value="RimM"/>
    <property type="match status" value="1"/>
</dbReference>
<dbReference type="HAMAP" id="MF_00014">
    <property type="entry name" value="Ribosome_mat_RimM"/>
    <property type="match status" value="1"/>
</dbReference>
<dbReference type="InterPro" id="IPR027275">
    <property type="entry name" value="PRC-brl_dom"/>
</dbReference>
<dbReference type="InterPro" id="IPR011033">
    <property type="entry name" value="PRC_barrel-like_sf"/>
</dbReference>
<dbReference type="InterPro" id="IPR011961">
    <property type="entry name" value="RimM"/>
</dbReference>
<dbReference type="InterPro" id="IPR002676">
    <property type="entry name" value="RimM_N"/>
</dbReference>
<dbReference type="InterPro" id="IPR036976">
    <property type="entry name" value="RimM_N_sf"/>
</dbReference>
<dbReference type="InterPro" id="IPR009000">
    <property type="entry name" value="Transl_B-barrel_sf"/>
</dbReference>
<dbReference type="NCBIfam" id="TIGR02273">
    <property type="entry name" value="16S_RimM"/>
    <property type="match status" value="1"/>
</dbReference>
<dbReference type="PANTHER" id="PTHR33692">
    <property type="entry name" value="RIBOSOME MATURATION FACTOR RIMM"/>
    <property type="match status" value="1"/>
</dbReference>
<dbReference type="PANTHER" id="PTHR33692:SF1">
    <property type="entry name" value="RIBOSOME MATURATION FACTOR RIMM"/>
    <property type="match status" value="1"/>
</dbReference>
<dbReference type="Pfam" id="PF05239">
    <property type="entry name" value="PRC"/>
    <property type="match status" value="1"/>
</dbReference>
<dbReference type="Pfam" id="PF01782">
    <property type="entry name" value="RimM"/>
    <property type="match status" value="1"/>
</dbReference>
<dbReference type="SUPFAM" id="SSF50346">
    <property type="entry name" value="PRC-barrel domain"/>
    <property type="match status" value="1"/>
</dbReference>
<dbReference type="SUPFAM" id="SSF50447">
    <property type="entry name" value="Translation proteins"/>
    <property type="match status" value="1"/>
</dbReference>
<organism>
    <name type="scientific">Exiguobacterium sibiricum (strain DSM 17290 / CCUG 55495 / CIP 109462 / JCM 13490 / 255-15)</name>
    <dbReference type="NCBI Taxonomy" id="262543"/>
    <lineage>
        <taxon>Bacteria</taxon>
        <taxon>Bacillati</taxon>
        <taxon>Bacillota</taxon>
        <taxon>Bacilli</taxon>
        <taxon>Bacillales</taxon>
        <taxon>Bacillales Family XII. Incertae Sedis</taxon>
        <taxon>Exiguobacterium</taxon>
    </lineage>
</organism>
<accession>B1YIM5</accession>
<evidence type="ECO:0000255" key="1">
    <source>
        <dbReference type="HAMAP-Rule" id="MF_00014"/>
    </source>
</evidence>
<keyword id="KW-0143">Chaperone</keyword>
<keyword id="KW-0963">Cytoplasm</keyword>
<keyword id="KW-1185">Reference proteome</keyword>
<keyword id="KW-0690">Ribosome biogenesis</keyword>
<keyword id="KW-0698">rRNA processing</keyword>
<sequence>MEWLEVAKIANTHGLKGELKLLASTDFPEQRFKVGNEVFLESNGIYTPFMISSYRKHKQFIMVTFKGMQHINDVEKYKGLKLYVHPEALQELGEHEFYYHEIIGCTVFDGEDEIGVVSEILETGANDVWTIKRPGKKDVLIPYIEQVVASIDVEAKRIQITPLPGLIEG</sequence>